<feature type="chain" id="PRO_0000055290" description="Histone H2A-IV">
    <location>
        <begin position="1"/>
        <end position="129"/>
    </location>
</feature>
<comment type="function">
    <text>Core component of nucleosome. Nucleosomes wrap and compact DNA into chromatin, limiting DNA accessibility to the cellular machineries which require DNA as a template. Histones thereby play a central role in transcription regulation, DNA repair, DNA replication and chromosomal stability. DNA accessibility is regulated via a complex set of post-translational modifications of histones, also called histone code, and nucleosome remodeling.</text>
</comment>
<comment type="subunit">
    <text>The nucleosome is a histone octamer containing two molecules each of H2A, H2B, H3 and H4 assembled in one H3-H4 heterotetramer and two H2A-H2B heterodimers. The octamer wraps approximately 147 bp of DNA.</text>
</comment>
<comment type="subcellular location">
    <subcellularLocation>
        <location>Nucleus</location>
    </subcellularLocation>
    <subcellularLocation>
        <location>Chromosome</location>
    </subcellularLocation>
</comment>
<comment type="similarity">
    <text evidence="1">Belongs to the histone H2A family.</text>
</comment>
<organism>
    <name type="scientific">Volvox carteri</name>
    <name type="common">Green alga</name>
    <dbReference type="NCBI Taxonomy" id="3067"/>
    <lineage>
        <taxon>Eukaryota</taxon>
        <taxon>Viridiplantae</taxon>
        <taxon>Chlorophyta</taxon>
        <taxon>core chlorophytes</taxon>
        <taxon>Chlorophyceae</taxon>
        <taxon>CS clade</taxon>
        <taxon>Chlamydomonadales</taxon>
        <taxon>Volvocaceae</taxon>
        <taxon>Volvox</taxon>
    </lineage>
</organism>
<evidence type="ECO:0000305" key="1"/>
<keyword id="KW-0158">Chromosome</keyword>
<keyword id="KW-0238">DNA-binding</keyword>
<keyword id="KW-0544">Nucleosome core</keyword>
<keyword id="KW-0539">Nucleus</keyword>
<name>H2A4_VOLCA</name>
<reference key="1">
    <citation type="journal article" date="1990" name="Gene">
        <title>Organization and transcription of Volvox histone-encoding genes: similarities between algal and animal genes.</title>
        <authorList>
            <person name="Mueller K."/>
            <person name="Lindauer A."/>
            <person name="Bruederlein M."/>
            <person name="Schmitt R."/>
        </authorList>
    </citation>
    <scope>NUCLEOTIDE SEQUENCE [GENOMIC DNA]</scope>
    <source>
        <strain>f. Nagariensis / HK10</strain>
    </source>
</reference>
<dbReference type="EMBL" id="M31922">
    <property type="protein sequence ID" value="AAA34249.1"/>
    <property type="molecule type" value="Genomic_DNA"/>
</dbReference>
<dbReference type="PIR" id="JQ0796">
    <property type="entry name" value="JQ0796"/>
</dbReference>
<dbReference type="SMR" id="P16866"/>
<dbReference type="OMA" id="CALESQH"/>
<dbReference type="GO" id="GO:0000786">
    <property type="term" value="C:nucleosome"/>
    <property type="evidence" value="ECO:0007669"/>
    <property type="project" value="UniProtKB-KW"/>
</dbReference>
<dbReference type="GO" id="GO:0005634">
    <property type="term" value="C:nucleus"/>
    <property type="evidence" value="ECO:0007669"/>
    <property type="project" value="UniProtKB-SubCell"/>
</dbReference>
<dbReference type="GO" id="GO:0003677">
    <property type="term" value="F:DNA binding"/>
    <property type="evidence" value="ECO:0007669"/>
    <property type="project" value="UniProtKB-KW"/>
</dbReference>
<dbReference type="GO" id="GO:0046982">
    <property type="term" value="F:protein heterodimerization activity"/>
    <property type="evidence" value="ECO:0007669"/>
    <property type="project" value="InterPro"/>
</dbReference>
<dbReference type="GO" id="GO:0030527">
    <property type="term" value="F:structural constituent of chromatin"/>
    <property type="evidence" value="ECO:0007669"/>
    <property type="project" value="InterPro"/>
</dbReference>
<dbReference type="CDD" id="cd00074">
    <property type="entry name" value="HFD_H2A"/>
    <property type="match status" value="1"/>
</dbReference>
<dbReference type="FunFam" id="1.10.20.10:FF:000009">
    <property type="entry name" value="Histone H2A"/>
    <property type="match status" value="1"/>
</dbReference>
<dbReference type="Gene3D" id="1.10.20.10">
    <property type="entry name" value="Histone, subunit A"/>
    <property type="match status" value="1"/>
</dbReference>
<dbReference type="InterPro" id="IPR009072">
    <property type="entry name" value="Histone-fold"/>
</dbReference>
<dbReference type="InterPro" id="IPR002119">
    <property type="entry name" value="Histone_H2A"/>
</dbReference>
<dbReference type="InterPro" id="IPR007125">
    <property type="entry name" value="Histone_H2A/H2B/H3"/>
</dbReference>
<dbReference type="InterPro" id="IPR032454">
    <property type="entry name" value="Histone_H2A_C"/>
</dbReference>
<dbReference type="InterPro" id="IPR032458">
    <property type="entry name" value="Histone_H2A_CS"/>
</dbReference>
<dbReference type="PANTHER" id="PTHR23430">
    <property type="entry name" value="HISTONE H2A"/>
    <property type="match status" value="1"/>
</dbReference>
<dbReference type="Pfam" id="PF00125">
    <property type="entry name" value="Histone"/>
    <property type="match status" value="1"/>
</dbReference>
<dbReference type="Pfam" id="PF16211">
    <property type="entry name" value="Histone_H2A_C"/>
    <property type="match status" value="1"/>
</dbReference>
<dbReference type="PRINTS" id="PR00620">
    <property type="entry name" value="HISTONEH2A"/>
</dbReference>
<dbReference type="SMART" id="SM00414">
    <property type="entry name" value="H2A"/>
    <property type="match status" value="1"/>
</dbReference>
<dbReference type="SUPFAM" id="SSF47113">
    <property type="entry name" value="Histone-fold"/>
    <property type="match status" value="1"/>
</dbReference>
<dbReference type="PROSITE" id="PS00046">
    <property type="entry name" value="HISTONE_H2A"/>
    <property type="match status" value="1"/>
</dbReference>
<accession>P16866</accession>
<sequence>MAGRGKGKTAGKKAVSRSSKAGLQFPVGRIARYLKKGKYAERIGAGAPVYLAAVLEYLTAEVLELAGNAARDNKKNRIVPRHIQLAIRNDEELGKLLGDVTIASGGVLPNIHAVLLPKKSKGGKGEEAA</sequence>
<protein>
    <recommendedName>
        <fullName>Histone H2A-IV</fullName>
    </recommendedName>
</protein>
<proteinExistence type="inferred from homology"/>